<proteinExistence type="inferred from homology"/>
<accession>Q6FIN4</accession>
<reference key="1">
    <citation type="journal article" date="2004" name="Nature">
        <title>Genome evolution in yeasts.</title>
        <authorList>
            <person name="Dujon B."/>
            <person name="Sherman D."/>
            <person name="Fischer G."/>
            <person name="Durrens P."/>
            <person name="Casaregola S."/>
            <person name="Lafontaine I."/>
            <person name="de Montigny J."/>
            <person name="Marck C."/>
            <person name="Neuveglise C."/>
            <person name="Talla E."/>
            <person name="Goffard N."/>
            <person name="Frangeul L."/>
            <person name="Aigle M."/>
            <person name="Anthouard V."/>
            <person name="Babour A."/>
            <person name="Barbe V."/>
            <person name="Barnay S."/>
            <person name="Blanchin S."/>
            <person name="Beckerich J.-M."/>
            <person name="Beyne E."/>
            <person name="Bleykasten C."/>
            <person name="Boisrame A."/>
            <person name="Boyer J."/>
            <person name="Cattolico L."/>
            <person name="Confanioleri F."/>
            <person name="de Daruvar A."/>
            <person name="Despons L."/>
            <person name="Fabre E."/>
            <person name="Fairhead C."/>
            <person name="Ferry-Dumazet H."/>
            <person name="Groppi A."/>
            <person name="Hantraye F."/>
            <person name="Hennequin C."/>
            <person name="Jauniaux N."/>
            <person name="Joyet P."/>
            <person name="Kachouri R."/>
            <person name="Kerrest A."/>
            <person name="Koszul R."/>
            <person name="Lemaire M."/>
            <person name="Lesur I."/>
            <person name="Ma L."/>
            <person name="Muller H."/>
            <person name="Nicaud J.-M."/>
            <person name="Nikolski M."/>
            <person name="Oztas S."/>
            <person name="Ozier-Kalogeropoulos O."/>
            <person name="Pellenz S."/>
            <person name="Potier S."/>
            <person name="Richard G.-F."/>
            <person name="Straub M.-L."/>
            <person name="Suleau A."/>
            <person name="Swennen D."/>
            <person name="Tekaia F."/>
            <person name="Wesolowski-Louvel M."/>
            <person name="Westhof E."/>
            <person name="Wirth B."/>
            <person name="Zeniou-Meyer M."/>
            <person name="Zivanovic Y."/>
            <person name="Bolotin-Fukuhara M."/>
            <person name="Thierry A."/>
            <person name="Bouchier C."/>
            <person name="Caudron B."/>
            <person name="Scarpelli C."/>
            <person name="Gaillardin C."/>
            <person name="Weissenbach J."/>
            <person name="Wincker P."/>
            <person name="Souciet J.-L."/>
        </authorList>
    </citation>
    <scope>NUCLEOTIDE SEQUENCE [LARGE SCALE GENOMIC DNA]</scope>
    <source>
        <strain>ATCC 2001 / BCRC 20586 / JCM 3761 / NBRC 0622 / NRRL Y-65 / CBS 138</strain>
    </source>
</reference>
<comment type="function">
    <text evidence="1">Recruits the ubiquitination machinery to RNA polymerase II for polyubiquitination, removal and degradation, when the transcription-coupled repair (TCR) factor RAD26 fails to efficiently displace stalled RNA polymerase II. Also involved in telomere length regulation. Binds DNA.</text>
</comment>
<comment type="subunit">
    <text evidence="1">Homodimer; may form higher order oligomers. Interacts with the large RNA polymerase II subunit RPO21; the interaction is direct and serves to bridge RPO21 to the Elongin complex in a manner dependent on transcription stress. Interacts with RAD26.</text>
</comment>
<comment type="subcellular location">
    <subcellularLocation>
        <location evidence="1">Cytoplasm</location>
    </subcellularLocation>
    <subcellularLocation>
        <location evidence="1">Nucleus</location>
    </subcellularLocation>
    <subcellularLocation>
        <location evidence="1">Chromosome</location>
        <location evidence="1">Telomere</location>
    </subcellularLocation>
    <text evidence="1">During transcription stress, localizes to the nucleus following proteolytic cleavage by the proteasome.</text>
</comment>
<comment type="PTM">
    <text evidence="1">Ubiquitinated.</text>
</comment>
<comment type="PTM">
    <text evidence="1">Proteolytically cleaved by the proteasome in response to transcription stress; the resulting N-terminal form constitutes the activated nuclear form and the C-terminal portion is degraded.</text>
</comment>
<comment type="similarity">
    <text evidence="3">Belongs to the DEF1 family.</text>
</comment>
<dbReference type="EMBL" id="CR380959">
    <property type="protein sequence ID" value="CAG62890.1"/>
    <property type="molecule type" value="Genomic_DNA"/>
</dbReference>
<dbReference type="RefSeq" id="XP_449910.1">
    <property type="nucleotide sequence ID" value="XM_449910.1"/>
</dbReference>
<dbReference type="FunCoup" id="Q6FIN4">
    <property type="interactions" value="300"/>
</dbReference>
<dbReference type="STRING" id="284593.Q6FIN4"/>
<dbReference type="EnsemblFungi" id="CAGL0M13035g-T">
    <property type="protein sequence ID" value="CAGL0M13035g-T-p1"/>
    <property type="gene ID" value="CAGL0M13035g"/>
</dbReference>
<dbReference type="KEGG" id="cgr:2891200"/>
<dbReference type="CGD" id="CAL0136877">
    <property type="gene designation" value="CAGL0M13035g"/>
</dbReference>
<dbReference type="VEuPathDB" id="FungiDB:CAGL0M13035g"/>
<dbReference type="eggNOG" id="ENOG502S359">
    <property type="taxonomic scope" value="Eukaryota"/>
</dbReference>
<dbReference type="HOGENOM" id="CLU_023119_0_0_1"/>
<dbReference type="InParanoid" id="Q6FIN4"/>
<dbReference type="OMA" id="MYQNQFP"/>
<dbReference type="Proteomes" id="UP000002428">
    <property type="component" value="Chromosome M"/>
</dbReference>
<dbReference type="GO" id="GO:0000785">
    <property type="term" value="C:chromatin"/>
    <property type="evidence" value="ECO:0007669"/>
    <property type="project" value="EnsemblFungi"/>
</dbReference>
<dbReference type="GO" id="GO:0000781">
    <property type="term" value="C:chromosome, telomeric region"/>
    <property type="evidence" value="ECO:0007669"/>
    <property type="project" value="UniProtKB-SubCell"/>
</dbReference>
<dbReference type="GO" id="GO:0005737">
    <property type="term" value="C:cytoplasm"/>
    <property type="evidence" value="ECO:0007669"/>
    <property type="project" value="UniProtKB-SubCell"/>
</dbReference>
<dbReference type="GO" id="GO:0005634">
    <property type="term" value="C:nucleus"/>
    <property type="evidence" value="ECO:0007669"/>
    <property type="project" value="UniProtKB-SubCell"/>
</dbReference>
<dbReference type="GO" id="GO:0003677">
    <property type="term" value="F:DNA binding"/>
    <property type="evidence" value="ECO:0007669"/>
    <property type="project" value="UniProtKB-KW"/>
</dbReference>
<dbReference type="GO" id="GO:0062058">
    <property type="term" value="F:transcription factor TFIIH holo complex binding"/>
    <property type="evidence" value="ECO:0007669"/>
    <property type="project" value="EnsemblFungi"/>
</dbReference>
<dbReference type="GO" id="GO:0043130">
    <property type="term" value="F:ubiquitin binding"/>
    <property type="evidence" value="ECO:0007669"/>
    <property type="project" value="EnsemblFungi"/>
</dbReference>
<dbReference type="GO" id="GO:0060261">
    <property type="term" value="P:positive regulation of transcription initiation by RNA polymerase II"/>
    <property type="evidence" value="ECO:0007669"/>
    <property type="project" value="EnsemblFungi"/>
</dbReference>
<dbReference type="GO" id="GO:0016567">
    <property type="term" value="P:protein ubiquitination"/>
    <property type="evidence" value="ECO:0007669"/>
    <property type="project" value="EnsemblFungi"/>
</dbReference>
<dbReference type="GO" id="GO:0061635">
    <property type="term" value="P:regulation of protein complex stability"/>
    <property type="evidence" value="ECO:0007669"/>
    <property type="project" value="EnsemblFungi"/>
</dbReference>
<dbReference type="GO" id="GO:0000723">
    <property type="term" value="P:telomere maintenance"/>
    <property type="evidence" value="ECO:0007669"/>
    <property type="project" value="EnsemblFungi"/>
</dbReference>
<dbReference type="GO" id="GO:0006283">
    <property type="term" value="P:transcription-coupled nucleotide-excision repair"/>
    <property type="evidence" value="ECO:0007669"/>
    <property type="project" value="EnsemblFungi"/>
</dbReference>
<dbReference type="GO" id="GO:0006511">
    <property type="term" value="P:ubiquitin-dependent protein catabolic process"/>
    <property type="evidence" value="ECO:0007669"/>
    <property type="project" value="EnsemblFungi"/>
</dbReference>
<dbReference type="CDD" id="cd14368">
    <property type="entry name" value="CUE_DEF1_like"/>
    <property type="match status" value="1"/>
</dbReference>
<dbReference type="InterPro" id="IPR041803">
    <property type="entry name" value="DEF1_CUE"/>
</dbReference>
<name>DEF1_CANGA</name>
<keyword id="KW-0158">Chromosome</keyword>
<keyword id="KW-0963">Cytoplasm</keyword>
<keyword id="KW-0227">DNA damage</keyword>
<keyword id="KW-0234">DNA repair</keyword>
<keyword id="KW-0238">DNA-binding</keyword>
<keyword id="KW-0539">Nucleus</keyword>
<keyword id="KW-1185">Reference proteome</keyword>
<keyword id="KW-0779">Telomere</keyword>
<keyword id="KW-0832">Ubl conjugation</keyword>
<keyword id="KW-0833">Ubl conjugation pathway</keyword>
<organism>
    <name type="scientific">Candida glabrata (strain ATCC 2001 / BCRC 20586 / JCM 3761 / NBRC 0622 / NRRL Y-65 / CBS 138)</name>
    <name type="common">Yeast</name>
    <name type="synonym">Nakaseomyces glabratus</name>
    <dbReference type="NCBI Taxonomy" id="284593"/>
    <lineage>
        <taxon>Eukaryota</taxon>
        <taxon>Fungi</taxon>
        <taxon>Dikarya</taxon>
        <taxon>Ascomycota</taxon>
        <taxon>Saccharomycotina</taxon>
        <taxon>Saccharomycetes</taxon>
        <taxon>Saccharomycetales</taxon>
        <taxon>Saccharomycetaceae</taxon>
        <taxon>Nakaseomyces</taxon>
    </lineage>
</organism>
<feature type="chain" id="PRO_0000405664" description="RNA polymerase II degradation factor 1">
    <location>
        <begin position="1"/>
        <end position="592"/>
    </location>
</feature>
<feature type="domain" description="CUE">
    <location>
        <begin position="3"/>
        <end position="47"/>
    </location>
</feature>
<feature type="region of interest" description="Disordered" evidence="2">
    <location>
        <begin position="53"/>
        <end position="343"/>
    </location>
</feature>
<feature type="region of interest" description="Disordered" evidence="2">
    <location>
        <begin position="438"/>
        <end position="457"/>
    </location>
</feature>
<feature type="region of interest" description="Disordered" evidence="2">
    <location>
        <begin position="494"/>
        <end position="537"/>
    </location>
</feature>
<feature type="region of interest" description="Disordered" evidence="2">
    <location>
        <begin position="552"/>
        <end position="592"/>
    </location>
</feature>
<feature type="compositionally biased region" description="Low complexity" evidence="2">
    <location>
        <begin position="65"/>
        <end position="88"/>
    </location>
</feature>
<feature type="compositionally biased region" description="Low complexity" evidence="2">
    <location>
        <begin position="100"/>
        <end position="146"/>
    </location>
</feature>
<feature type="compositionally biased region" description="Basic and acidic residues" evidence="2">
    <location>
        <begin position="203"/>
        <end position="253"/>
    </location>
</feature>
<feature type="compositionally biased region" description="Low complexity" evidence="2">
    <location>
        <begin position="258"/>
        <end position="309"/>
    </location>
</feature>
<feature type="compositionally biased region" description="Low complexity" evidence="2">
    <location>
        <begin position="318"/>
        <end position="343"/>
    </location>
</feature>
<feature type="compositionally biased region" description="Low complexity" evidence="2">
    <location>
        <begin position="552"/>
        <end position="575"/>
    </location>
</feature>
<feature type="compositionally biased region" description="Polar residues" evidence="2">
    <location>
        <begin position="582"/>
        <end position="592"/>
    </location>
</feature>
<sequence>MSSVQNKVETLVELFPDWKREDLLELVQEEKDTELEIIVEKITTGKVTKWDEVKKPKRERHAPEASSVRTYSSSTHSHSAASGGAAAPRYKKSGRFAGNSGVSNTATGSSTSTSSGTSTSASSHGAAQSASSGKNATAAAQAAVKKTGVPAGTKEEKIAQRLNSTHTQEERKKMSWAAIATPKPKPKPVQKKKEEEPAQESQEDTKASESSKESALENVEDLKNEVDNIEKEQEKKEEPAQETEKETVEKEQEPQPQPQEQEQPQEQAQEQAANEQQQQEQQQPQQPQQEQQEQQLAQEAAAPAEAAPASKQGSVSEAAQQQQQQQQQQTAPQQTAQQQQPAQQLTDAQLQAQAQAQAQAQAQAQQYYMYQNQFPGYSYPGMYDMQGYAYGQQYQQPTPMGGHPAMVNAQFSMQQGYMNAGTPVSAGVDLNTATAAPNTAQSPVAPHTQQQSQQQPYGAGSFMPYYAHFYQQYPYGQPQYGVAANQYPYQTTKSSGQNLYGGEYGQQAQQDAQAKGVQRNDSHSEQQTSDSAQQQLTPQQIQLQQYYQYQQQQQQQQQQQQQQAPQQQQQPNAQQYGYSGYDYNTKSTNGFY</sequence>
<gene>
    <name type="primary">DEF1</name>
    <name type="ordered locus">CAGL0M13035g</name>
</gene>
<evidence type="ECO:0000250" key="1">
    <source>
        <dbReference type="UniProtKB" id="P35732"/>
    </source>
</evidence>
<evidence type="ECO:0000256" key="2">
    <source>
        <dbReference type="SAM" id="MobiDB-lite"/>
    </source>
</evidence>
<evidence type="ECO:0000305" key="3"/>
<protein>
    <recommendedName>
        <fullName>RNA polymerase II degradation factor 1</fullName>
    </recommendedName>
</protein>